<name>VIF_HV2NZ</name>
<reference key="1">
    <citation type="journal article" date="1988" name="Proc. Natl. Acad. Sci. U.S.A.">
        <title>Genetic variability between isolates of human immunodeficiency virus (HIV) type 2 is comparable to the variability among HIV type 1.</title>
        <authorList>
            <person name="Zagury J.F."/>
            <person name="Franchini G."/>
            <person name="Reitz M.S. Jr."/>
            <person name="Collalti E."/>
            <person name="Starcich B.R."/>
            <person name="Hall L."/>
            <person name="Fargnoli K.A."/>
            <person name="Jagodzinski L.L."/>
            <person name="Guo H.-G."/>
            <person name="Laure F."/>
            <person name="Arya S.K."/>
            <person name="Josephs S.F."/>
            <person name="Zagury D."/>
            <person name="Wong-Staal F."/>
            <person name="Gallo R.C."/>
        </authorList>
    </citation>
    <scope>NUCLEOTIDE SEQUENCE [GENOMIC DNA]</scope>
</reference>
<gene>
    <name type="primary">vif</name>
</gene>
<accession>P05901</accession>
<organism>
    <name type="scientific">Human immunodeficiency virus type 2 subtype A (isolate NIH-Z)</name>
    <name type="common">HIV-2</name>
    <dbReference type="NCBI Taxonomy" id="11719"/>
    <lineage>
        <taxon>Viruses</taxon>
        <taxon>Riboviria</taxon>
        <taxon>Pararnavirae</taxon>
        <taxon>Artverviricota</taxon>
        <taxon>Revtraviricetes</taxon>
        <taxon>Ortervirales</taxon>
        <taxon>Retroviridae</taxon>
        <taxon>Orthoretrovirinae</taxon>
        <taxon>Lentivirus</taxon>
        <taxon>Human immunodeficiency virus 2</taxon>
    </lineage>
</organism>
<keyword id="KW-0014">AIDS</keyword>
<keyword id="KW-1032">Host cell membrane</keyword>
<keyword id="KW-1035">Host cytoplasm</keyword>
<keyword id="KW-1043">Host membrane</keyword>
<keyword id="KW-0945">Host-virus interaction</keyword>
<keyword id="KW-0472">Membrane</keyword>
<keyword id="KW-0597">Phosphoprotein</keyword>
<keyword id="KW-0832">Ubl conjugation</keyword>
<keyword id="KW-0833">Ubl conjugation pathway</keyword>
<keyword id="KW-0946">Virion</keyword>
<dbReference type="EMBL" id="J03654">
    <property type="protein sequence ID" value="AAB00756.1"/>
    <property type="molecule type" value="Genomic_DNA"/>
</dbReference>
<dbReference type="SMR" id="P05901"/>
<dbReference type="Proteomes" id="UP000246679">
    <property type="component" value="Segment"/>
</dbReference>
<dbReference type="GO" id="GO:0030430">
    <property type="term" value="C:host cell cytoplasm"/>
    <property type="evidence" value="ECO:0007669"/>
    <property type="project" value="UniProtKB-SubCell"/>
</dbReference>
<dbReference type="GO" id="GO:0020002">
    <property type="term" value="C:host cell plasma membrane"/>
    <property type="evidence" value="ECO:0007669"/>
    <property type="project" value="UniProtKB-SubCell"/>
</dbReference>
<dbReference type="GO" id="GO:0016020">
    <property type="term" value="C:membrane"/>
    <property type="evidence" value="ECO:0007669"/>
    <property type="project" value="UniProtKB-KW"/>
</dbReference>
<dbReference type="GO" id="GO:0044423">
    <property type="term" value="C:virion component"/>
    <property type="evidence" value="ECO:0007669"/>
    <property type="project" value="UniProtKB-KW"/>
</dbReference>
<dbReference type="GO" id="GO:0019058">
    <property type="term" value="P:viral life cycle"/>
    <property type="evidence" value="ECO:0007669"/>
    <property type="project" value="InterPro"/>
</dbReference>
<dbReference type="InterPro" id="IPR000475">
    <property type="entry name" value="Vif"/>
</dbReference>
<dbReference type="Pfam" id="PF00559">
    <property type="entry name" value="Vif"/>
    <property type="match status" value="1"/>
</dbReference>
<dbReference type="PRINTS" id="PR00349">
    <property type="entry name" value="VIRIONINFFCT"/>
</dbReference>
<proteinExistence type="evidence at transcript level"/>
<feature type="chain" id="PRO_0000085323" description="Virion infectivity factor">
    <location>
        <begin position="1"/>
        <end position="215"/>
    </location>
</feature>
<feature type="region of interest" description="Multimerization" evidence="1">
    <location>
        <begin position="154"/>
        <end position="167"/>
    </location>
</feature>
<feature type="region of interest" description="Disordered" evidence="2">
    <location>
        <begin position="162"/>
        <end position="203"/>
    </location>
</feature>
<feature type="short sequence motif" description="HCCH motif" evidence="1">
    <location>
        <begin position="110"/>
        <end position="141"/>
    </location>
</feature>
<feature type="short sequence motif" description="BC-box-like motif" evidence="1">
    <location>
        <begin position="147"/>
        <end position="156"/>
    </location>
</feature>
<feature type="compositionally biased region" description="Basic and acidic residues" evidence="2">
    <location>
        <begin position="173"/>
        <end position="189"/>
    </location>
</feature>
<feature type="modified residue" description="Phosphothreonine; by host MAP4K1" evidence="1">
    <location>
        <position position="98"/>
    </location>
</feature>
<feature type="modified residue" description="Phosphoserine; by host" evidence="1">
    <location>
        <position position="147"/>
    </location>
</feature>
<protein>
    <recommendedName>
        <fullName>Virion infectivity factor</fullName>
        <shortName>Vif</shortName>
    </recommendedName>
    <alternativeName>
        <fullName>Q protein</fullName>
    </alternativeName>
    <alternativeName>
        <fullName>SOR protein</fullName>
    </alternativeName>
</protein>
<sequence>MEEGKRWIVVPIWRVPGRMERWHSLVKYLKYRTKDLEKVCYVPHHKVGWAWWTCSRVIFPLKENSHLEIQAYWNLTPEKGWLSSHSVRITWYTEKFWTDVTPDCADTLIHSTYFSCFTAGEVRRAIRGEKLLSCCKYPRAHRSQVPSLQFLALVVVQQNDRSQGNSATRKQRRGDYRRGLRMARQDSRGYKQRGSESPPTRAHFPGLAEVLEILA</sequence>
<comment type="function">
    <text evidence="1">Counteracts the innate antiviral activity of APOBEC3G. Forms a complex with host APOBEC3G thus preventing the entry of this lethally hypermutating enzyme into progeny virions. Functions as an adapter molecule, recruiting APOBEC3G to the ubiquitin-proteasome machinery. Targets APOBEC3G for degradation through the assembly with elongin BC complex, CUL5 and RBX1. Binds viral RNA and affects the stability of viral nucleoprotein core. May play a role in viral morphology (By similarity).</text>
</comment>
<comment type="subunit">
    <text evidence="1">Homomultimer; in vitro and presumably in vivo. Interacts with viral Pr55Gag precursor and human APOBEC3G. The interaction between Vif and APOBEC3G is species-specific, which may play a role in restricting the replication of HIV to humans. Forms an E3 ligase complex by interacting with human CUL5 and elongin BC complex (ELOB and ELOC) (By similarity).</text>
</comment>
<comment type="subcellular location">
    <subcellularLocation>
        <location evidence="1">Host cytoplasm</location>
    </subcellularLocation>
    <subcellularLocation>
        <location evidence="1">Host cell membrane</location>
        <topology evidence="1">Peripheral membrane protein</topology>
        <orientation evidence="1">Cytoplasmic side</orientation>
    </subcellularLocation>
    <subcellularLocation>
        <location evidence="1">Virion</location>
    </subcellularLocation>
    <text evidence="1">In the cytoplasm, seems to colocalize with intermediate filament vimentin. A fraction is associated with the cytoplasmic side of cellular membranes, presumably via the interaction with Pr55Gag precursor (By similarity).</text>
</comment>
<comment type="induction">
    <text>Expressed late during infection in a Rev-dependent manner.</text>
</comment>
<comment type="domain">
    <text evidence="1">The BC-like-box motif mediates the interaction with elongin BC complex.</text>
</comment>
<comment type="domain">
    <text evidence="1">The HCCH motif (H-x(5)-C-x(18)-C-x(5)-H) mediates the interaction with CUL5.</text>
</comment>
<comment type="PTM">
    <text evidence="1">Processed in virion by the viral protease.</text>
</comment>
<comment type="PTM">
    <text evidence="1">Highly phosphorylated on serine and threonine residues.</text>
</comment>
<comment type="PTM">
    <text evidence="1">Polyubiquitinated and degraded by the proteasome in the presence of APOBEC3G.</text>
</comment>
<comment type="miscellaneous">
    <text>Required for replication in 'nonpermissive' cells, including primary T-cells, macrophages and certain T-cell lines, but is dispensable for replication in 'permissive' cell lines, such as 293T cells. In nonpermissive cells, Vif-defective viruses can produce virions, but they fail to complete reverse transcription and cannot successfully infect new cells.</text>
</comment>
<comment type="miscellaneous">
    <text>Vif-defective viruses show catastrophic failure in reverse transcription due to APOBEC-induced mutations that initiate a DNA base repair pathway and compromise the structural integrity of the ssDNA. In the absence of Vif, the virion is morphologically abnormal.</text>
</comment>
<comment type="similarity">
    <text evidence="3">Belongs to the primate lentivirus group Vif protein family.</text>
</comment>
<organismHost>
    <name type="scientific">Homo sapiens</name>
    <name type="common">Human</name>
    <dbReference type="NCBI Taxonomy" id="9606"/>
</organismHost>
<evidence type="ECO:0000250" key="1"/>
<evidence type="ECO:0000256" key="2">
    <source>
        <dbReference type="SAM" id="MobiDB-lite"/>
    </source>
</evidence>
<evidence type="ECO:0000305" key="3"/>